<gene>
    <name evidence="1" type="primary">PAC1</name>
    <name evidence="1" type="synonym">LIS1</name>
    <name type="ORF">PICST_76411</name>
</gene>
<reference key="1">
    <citation type="journal article" date="2007" name="Nat. Biotechnol.">
        <title>Genome sequence of the lignocellulose-bioconverting and xylose-fermenting yeast Pichia stipitis.</title>
        <authorList>
            <person name="Jeffries T.W."/>
            <person name="Grigoriev I.V."/>
            <person name="Grimwood J."/>
            <person name="Laplaza J.M."/>
            <person name="Aerts A."/>
            <person name="Salamov A."/>
            <person name="Schmutz J."/>
            <person name="Lindquist E."/>
            <person name="Dehal P."/>
            <person name="Shapiro H."/>
            <person name="Jin Y.-S."/>
            <person name="Passoth V."/>
            <person name="Richardson P.M."/>
        </authorList>
    </citation>
    <scope>NUCLEOTIDE SEQUENCE [LARGE SCALE GENOMIC DNA]</scope>
    <source>
        <strain>ATCC 58785 / CBS 6054 / NBRC 10063 / NRRL Y-11545</strain>
    </source>
</reference>
<dbReference type="EMBL" id="CP000496">
    <property type="protein sequence ID" value="ABN64861.2"/>
    <property type="molecule type" value="Genomic_DNA"/>
</dbReference>
<dbReference type="RefSeq" id="XP_001382890.2">
    <property type="nucleotide sequence ID" value="XM_001382853.1"/>
</dbReference>
<dbReference type="SMR" id="A3LNI7"/>
<dbReference type="FunCoup" id="A3LNI7">
    <property type="interactions" value="71"/>
</dbReference>
<dbReference type="STRING" id="322104.A3LNI7"/>
<dbReference type="GeneID" id="4836636"/>
<dbReference type="KEGG" id="pic:PICST_76411"/>
<dbReference type="eggNOG" id="KOG0295">
    <property type="taxonomic scope" value="Eukaryota"/>
</dbReference>
<dbReference type="HOGENOM" id="CLU_000288_57_15_1"/>
<dbReference type="InParanoid" id="A3LNI7"/>
<dbReference type="OMA" id="WHVATKE"/>
<dbReference type="OrthoDB" id="10264588at2759"/>
<dbReference type="Proteomes" id="UP000002258">
    <property type="component" value="Chromosome 2"/>
</dbReference>
<dbReference type="GO" id="GO:0005737">
    <property type="term" value="C:cytoplasm"/>
    <property type="evidence" value="ECO:0007669"/>
    <property type="project" value="UniProtKB-UniRule"/>
</dbReference>
<dbReference type="GO" id="GO:0005874">
    <property type="term" value="C:microtubule"/>
    <property type="evidence" value="ECO:0007669"/>
    <property type="project" value="UniProtKB-KW"/>
</dbReference>
<dbReference type="GO" id="GO:0005875">
    <property type="term" value="C:microtubule associated complex"/>
    <property type="evidence" value="ECO:0007669"/>
    <property type="project" value="UniProtKB-UniRule"/>
</dbReference>
<dbReference type="GO" id="GO:0000922">
    <property type="term" value="C:spindle pole"/>
    <property type="evidence" value="ECO:0007669"/>
    <property type="project" value="UniProtKB-SubCell"/>
</dbReference>
<dbReference type="GO" id="GO:0070840">
    <property type="term" value="F:dynein complex binding"/>
    <property type="evidence" value="ECO:0007669"/>
    <property type="project" value="UniProtKB-UniRule"/>
</dbReference>
<dbReference type="GO" id="GO:0051301">
    <property type="term" value="P:cell division"/>
    <property type="evidence" value="ECO:0007669"/>
    <property type="project" value="UniProtKB-KW"/>
</dbReference>
<dbReference type="GO" id="GO:0000132">
    <property type="term" value="P:establishment of mitotic spindle orientation"/>
    <property type="evidence" value="ECO:0007669"/>
    <property type="project" value="UniProtKB-UniRule"/>
</dbReference>
<dbReference type="GO" id="GO:0051012">
    <property type="term" value="P:microtubule sliding"/>
    <property type="evidence" value="ECO:0007669"/>
    <property type="project" value="UniProtKB-UniRule"/>
</dbReference>
<dbReference type="CDD" id="cd00200">
    <property type="entry name" value="WD40"/>
    <property type="match status" value="1"/>
</dbReference>
<dbReference type="Gene3D" id="1.20.960.30">
    <property type="match status" value="1"/>
</dbReference>
<dbReference type="Gene3D" id="2.130.10.10">
    <property type="entry name" value="YVTN repeat-like/Quinoprotein amine dehydrogenase"/>
    <property type="match status" value="1"/>
</dbReference>
<dbReference type="HAMAP" id="MF_03141">
    <property type="entry name" value="lis1"/>
    <property type="match status" value="1"/>
</dbReference>
<dbReference type="InterPro" id="IPR017252">
    <property type="entry name" value="Dynein_regulator_LIS1"/>
</dbReference>
<dbReference type="InterPro" id="IPR020472">
    <property type="entry name" value="G-protein_beta_WD-40_rep"/>
</dbReference>
<dbReference type="InterPro" id="IPR037190">
    <property type="entry name" value="LIS1_N"/>
</dbReference>
<dbReference type="InterPro" id="IPR050995">
    <property type="entry name" value="WD-F-box_domain-protein"/>
</dbReference>
<dbReference type="InterPro" id="IPR015943">
    <property type="entry name" value="WD40/YVTN_repeat-like_dom_sf"/>
</dbReference>
<dbReference type="InterPro" id="IPR019775">
    <property type="entry name" value="WD40_repeat_CS"/>
</dbReference>
<dbReference type="InterPro" id="IPR036322">
    <property type="entry name" value="WD40_repeat_dom_sf"/>
</dbReference>
<dbReference type="InterPro" id="IPR001680">
    <property type="entry name" value="WD40_rpt"/>
</dbReference>
<dbReference type="PANTHER" id="PTHR14604:SF4">
    <property type="entry name" value="F-BOX DOMAIN-CONTAINING PROTEIN"/>
    <property type="match status" value="1"/>
</dbReference>
<dbReference type="PANTHER" id="PTHR14604">
    <property type="entry name" value="WD40 REPEAT PF20"/>
    <property type="match status" value="1"/>
</dbReference>
<dbReference type="Pfam" id="PF00400">
    <property type="entry name" value="WD40"/>
    <property type="match status" value="4"/>
</dbReference>
<dbReference type="PIRSF" id="PIRSF037647">
    <property type="entry name" value="Dynein_regulator_Lis1"/>
    <property type="match status" value="1"/>
</dbReference>
<dbReference type="PRINTS" id="PR00320">
    <property type="entry name" value="GPROTEINBRPT"/>
</dbReference>
<dbReference type="SMART" id="SM00320">
    <property type="entry name" value="WD40"/>
    <property type="match status" value="7"/>
</dbReference>
<dbReference type="SUPFAM" id="SSF109925">
    <property type="entry name" value="Lissencephaly-1 protein (Lis-1, PAF-AH alpha) N-terminal domain"/>
    <property type="match status" value="1"/>
</dbReference>
<dbReference type="SUPFAM" id="SSF50978">
    <property type="entry name" value="WD40 repeat-like"/>
    <property type="match status" value="1"/>
</dbReference>
<dbReference type="PROSITE" id="PS00678">
    <property type="entry name" value="WD_REPEATS_1"/>
    <property type="match status" value="3"/>
</dbReference>
<dbReference type="PROSITE" id="PS50082">
    <property type="entry name" value="WD_REPEATS_2"/>
    <property type="match status" value="3"/>
</dbReference>
<dbReference type="PROSITE" id="PS50294">
    <property type="entry name" value="WD_REPEATS_REGION"/>
    <property type="match status" value="1"/>
</dbReference>
<keyword id="KW-0131">Cell cycle</keyword>
<keyword id="KW-0132">Cell division</keyword>
<keyword id="KW-0175">Coiled coil</keyword>
<keyword id="KW-0963">Cytoplasm</keyword>
<keyword id="KW-0206">Cytoskeleton</keyword>
<keyword id="KW-0493">Microtubule</keyword>
<keyword id="KW-0498">Mitosis</keyword>
<keyword id="KW-1185">Reference proteome</keyword>
<keyword id="KW-0677">Repeat</keyword>
<keyword id="KW-0813">Transport</keyword>
<keyword id="KW-0853">WD repeat</keyword>
<feature type="chain" id="PRO_0000405095" description="Nuclear distribution protein PAC1">
    <location>
        <begin position="1"/>
        <end position="524"/>
    </location>
</feature>
<feature type="repeat" description="WD 1">
    <location>
        <begin position="121"/>
        <end position="160"/>
    </location>
</feature>
<feature type="repeat" description="WD 2">
    <location>
        <begin position="166"/>
        <end position="217"/>
    </location>
</feature>
<feature type="repeat" description="WD 3">
    <location>
        <begin position="220"/>
        <end position="262"/>
    </location>
</feature>
<feature type="repeat" description="WD 4">
    <location>
        <begin position="277"/>
        <end position="317"/>
    </location>
</feature>
<feature type="repeat" description="WD 5">
    <location>
        <begin position="353"/>
        <end position="394"/>
    </location>
</feature>
<feature type="repeat" description="WD 6">
    <location>
        <begin position="415"/>
        <end position="454"/>
    </location>
</feature>
<feature type="repeat" description="WD 7">
    <location>
        <begin position="463"/>
        <end position="492"/>
    </location>
</feature>
<feature type="repeat" description="WD 8">
    <location>
        <begin position="493"/>
        <end position="524"/>
    </location>
</feature>
<feature type="coiled-coil region" evidence="1">
    <location>
        <begin position="65"/>
        <end position="90"/>
    </location>
</feature>
<name>LIS1_PICST</name>
<accession>A3LNI7</accession>
<protein>
    <recommendedName>
        <fullName evidence="1">Nuclear distribution protein PAC1</fullName>
    </recommendedName>
    <alternativeName>
        <fullName evidence="1">Lissencephaly-1 homolog</fullName>
        <shortName evidence="1">LIS-1</shortName>
    </alternativeName>
    <alternativeName>
        <fullName evidence="1">nudF homolog</fullName>
    </alternativeName>
</protein>
<organism>
    <name type="scientific">Scheffersomyces stipitis (strain ATCC 58785 / CBS 6054 / NBRC 10063 / NRRL Y-11545)</name>
    <name type="common">Yeast</name>
    <name type="synonym">Pichia stipitis</name>
    <dbReference type="NCBI Taxonomy" id="322104"/>
    <lineage>
        <taxon>Eukaryota</taxon>
        <taxon>Fungi</taxon>
        <taxon>Dikarya</taxon>
        <taxon>Ascomycota</taxon>
        <taxon>Saccharomycotina</taxon>
        <taxon>Pichiomycetes</taxon>
        <taxon>Debaryomycetaceae</taxon>
        <taxon>Scheffersomyces</taxon>
    </lineage>
</organism>
<sequence>MNRSQILTDRQQQELNKAILQYLEPMLTESSSDQEVYRSLQQILVPPSSSSSEAIVDNYLEKKWSTVLRLQRKIIDLENEVGTLRSIVDGQQSVSNGAASVISKDRINWLPNRASKSFPTQQNQLVMASVIHPVLPVIFGGCSDGSIIVWNIVNDDTSIPEKIIRAHTRSINKLAFSVEPADLSKDLTKSKTYIFASCSADLSIKIWDSSSYRHIRTLTGHDHTVSSVAFSQSNPDHLYSVSRDKTVKIWDLVNGYCVKSFTGHSEWVRDIDVASVNSQLSLNNMKVSAELGDFVVTCSNDQSVRVSHAESGAGLALLIGHTHVIEKVKFLPAVSNTILDKFLKENHAQFPSIPQELVSDEIFTTTLGYKYCISGGRDNLLKLWLIPPPTLIPHRSPLPAQHNNSQGWAIADLVGHQSWVKAIAIHPNGRFIFSGSDDKTIKVWDLANLNVTGSVKCVRTLSGHDGFINDLDFAAFNRDSGKEDKIKEDATEEESHQQLMKFIEGRMRCLFISGAADNSIKLWS</sequence>
<proteinExistence type="inferred from homology"/>
<comment type="function">
    <text evidence="1">Positively regulates the activity of the minus-end directed microtubule motor protein dynein. Plays a central role in positioning the mitotic spindle at the bud neck during cell division. Targets cytoplasmic dynein to microtubule plus ends, thereby promoting dynein-mediated microtubule sliding along the bud cortex and consequently the movement of the mitotic spindle to the bud neck.</text>
</comment>
<comment type="subunit">
    <text evidence="1">Self-associates. Interacts with NDL1 and dynein.</text>
</comment>
<comment type="subcellular location">
    <subcellularLocation>
        <location evidence="1">Cytoplasm</location>
        <location evidence="1">Cytoskeleton</location>
    </subcellularLocation>
    <subcellularLocation>
        <location evidence="1">Cytoplasm</location>
        <location evidence="1">Cytoskeleton</location>
        <location evidence="1">Spindle pole</location>
    </subcellularLocation>
    <text evidence="1">Localizes to the plus ends of microtubules and the mitotic spindle poles.</text>
</comment>
<comment type="similarity">
    <text evidence="1">Belongs to the WD repeat LIS1/nudF family.</text>
</comment>
<evidence type="ECO:0000255" key="1">
    <source>
        <dbReference type="HAMAP-Rule" id="MF_03141"/>
    </source>
</evidence>